<comment type="function">
    <text evidence="1">Condensation of UDP-2,3-diacylglucosamine and 2,3-diacylglucosamine-1-phosphate to form lipid A disaccharide, a precursor of lipid A, a phosphorylated glycolipid that anchors the lipopolysaccharide to the outer membrane of the cell.</text>
</comment>
<comment type="catalytic activity">
    <reaction evidence="1">
        <text>a lipid X + a UDP-2-N,3-O-bis[(3R)-3-hydroxyacyl]-alpha-D-glucosamine = a lipid A disaccharide + UDP + H(+)</text>
        <dbReference type="Rhea" id="RHEA:67828"/>
        <dbReference type="ChEBI" id="CHEBI:15378"/>
        <dbReference type="ChEBI" id="CHEBI:58223"/>
        <dbReference type="ChEBI" id="CHEBI:137748"/>
        <dbReference type="ChEBI" id="CHEBI:176338"/>
        <dbReference type="ChEBI" id="CHEBI:176343"/>
        <dbReference type="EC" id="2.4.1.182"/>
    </reaction>
</comment>
<comment type="pathway">
    <text evidence="1">Bacterial outer membrane biogenesis; LPS lipid A biosynthesis.</text>
</comment>
<comment type="similarity">
    <text evidence="1">Belongs to the LpxB family.</text>
</comment>
<proteinExistence type="inferred from homology"/>
<keyword id="KW-0328">Glycosyltransferase</keyword>
<keyword id="KW-0441">Lipid A biosynthesis</keyword>
<keyword id="KW-0444">Lipid biosynthesis</keyword>
<keyword id="KW-0443">Lipid metabolism</keyword>
<keyword id="KW-0808">Transferase</keyword>
<accession>A3MKS9</accession>
<name>LPXB_BURM7</name>
<feature type="chain" id="PRO_1000049387" description="Lipid-A-disaccharide synthase">
    <location>
        <begin position="1"/>
        <end position="388"/>
    </location>
</feature>
<sequence>MAFQLTPLRVALVAGEPSGDLLGASLLGGLHARLPASSRYYGIGGPRMSAVEFDAHWPMEKLAVRGYVEALKHIPEILRIRGELKRQLFAEPPDAFVGIDAPDFNFGLEQALRGAGIPTIHFVCPSIWAWRGGRIKKIVKAVDHMLCLFPFEPELLEKAGVAATFVGHPLADEIPLEPDTHGARIALGLPGGGPVIAVLPGSRRSEIELIGPTFFDAMELMQQREPGVRFVVPAATPALRALLQPLVDAHPSLSVTLTEGRAQVAMTAADAILVKSGTVTLEAALLKKPMVISYKVPWLTGQIMRRQGYLPYVGLPNILAGRFVVPELLQHFATPDALADATLTQLRDDANRRALADIFTDMHLALRQNTAQRAAEAVAHVIDSRKPR</sequence>
<organism>
    <name type="scientific">Burkholderia mallei (strain NCTC 10247)</name>
    <dbReference type="NCBI Taxonomy" id="320389"/>
    <lineage>
        <taxon>Bacteria</taxon>
        <taxon>Pseudomonadati</taxon>
        <taxon>Pseudomonadota</taxon>
        <taxon>Betaproteobacteria</taxon>
        <taxon>Burkholderiales</taxon>
        <taxon>Burkholderiaceae</taxon>
        <taxon>Burkholderia</taxon>
        <taxon>pseudomallei group</taxon>
    </lineage>
</organism>
<protein>
    <recommendedName>
        <fullName evidence="1">Lipid-A-disaccharide synthase</fullName>
        <ecNumber evidence="1">2.4.1.182</ecNumber>
    </recommendedName>
</protein>
<dbReference type="EC" id="2.4.1.182" evidence="1"/>
<dbReference type="EMBL" id="CP000548">
    <property type="protein sequence ID" value="ABO04928.1"/>
    <property type="molecule type" value="Genomic_DNA"/>
</dbReference>
<dbReference type="RefSeq" id="WP_004266728.1">
    <property type="nucleotide sequence ID" value="NZ_CP007802.1"/>
</dbReference>
<dbReference type="SMR" id="A3MKS9"/>
<dbReference type="CAZy" id="GT19">
    <property type="family name" value="Glycosyltransferase Family 19"/>
</dbReference>
<dbReference type="KEGG" id="bmaz:BM44_1811"/>
<dbReference type="KEGG" id="bmn:BMA10247_1314"/>
<dbReference type="PATRIC" id="fig|320389.8.peg.2026"/>
<dbReference type="UniPathway" id="UPA00973"/>
<dbReference type="GO" id="GO:0016020">
    <property type="term" value="C:membrane"/>
    <property type="evidence" value="ECO:0007669"/>
    <property type="project" value="GOC"/>
</dbReference>
<dbReference type="GO" id="GO:0008915">
    <property type="term" value="F:lipid-A-disaccharide synthase activity"/>
    <property type="evidence" value="ECO:0007669"/>
    <property type="project" value="UniProtKB-UniRule"/>
</dbReference>
<dbReference type="GO" id="GO:0005543">
    <property type="term" value="F:phospholipid binding"/>
    <property type="evidence" value="ECO:0007669"/>
    <property type="project" value="TreeGrafter"/>
</dbReference>
<dbReference type="GO" id="GO:0009245">
    <property type="term" value="P:lipid A biosynthetic process"/>
    <property type="evidence" value="ECO:0007669"/>
    <property type="project" value="UniProtKB-UniRule"/>
</dbReference>
<dbReference type="HAMAP" id="MF_00392">
    <property type="entry name" value="LpxB"/>
    <property type="match status" value="1"/>
</dbReference>
<dbReference type="InterPro" id="IPR003835">
    <property type="entry name" value="Glyco_trans_19"/>
</dbReference>
<dbReference type="NCBIfam" id="TIGR00215">
    <property type="entry name" value="lpxB"/>
    <property type="match status" value="1"/>
</dbReference>
<dbReference type="PANTHER" id="PTHR30372">
    <property type="entry name" value="LIPID-A-DISACCHARIDE SYNTHASE"/>
    <property type="match status" value="1"/>
</dbReference>
<dbReference type="PANTHER" id="PTHR30372:SF4">
    <property type="entry name" value="LIPID-A-DISACCHARIDE SYNTHASE, MITOCHONDRIAL-RELATED"/>
    <property type="match status" value="1"/>
</dbReference>
<dbReference type="Pfam" id="PF02684">
    <property type="entry name" value="LpxB"/>
    <property type="match status" value="1"/>
</dbReference>
<dbReference type="SUPFAM" id="SSF53756">
    <property type="entry name" value="UDP-Glycosyltransferase/glycogen phosphorylase"/>
    <property type="match status" value="1"/>
</dbReference>
<evidence type="ECO:0000255" key="1">
    <source>
        <dbReference type="HAMAP-Rule" id="MF_00392"/>
    </source>
</evidence>
<gene>
    <name evidence="1" type="primary">lpxB</name>
    <name type="ordered locus">BMA10247_1314</name>
</gene>
<reference key="1">
    <citation type="journal article" date="2010" name="Genome Biol. Evol.">
        <title>Continuing evolution of Burkholderia mallei through genome reduction and large-scale rearrangements.</title>
        <authorList>
            <person name="Losada L."/>
            <person name="Ronning C.M."/>
            <person name="DeShazer D."/>
            <person name="Woods D."/>
            <person name="Fedorova N."/>
            <person name="Kim H.S."/>
            <person name="Shabalina S.A."/>
            <person name="Pearson T.R."/>
            <person name="Brinkac L."/>
            <person name="Tan P."/>
            <person name="Nandi T."/>
            <person name="Crabtree J."/>
            <person name="Badger J."/>
            <person name="Beckstrom-Sternberg S."/>
            <person name="Saqib M."/>
            <person name="Schutzer S.E."/>
            <person name="Keim P."/>
            <person name="Nierman W.C."/>
        </authorList>
    </citation>
    <scope>NUCLEOTIDE SEQUENCE [LARGE SCALE GENOMIC DNA]</scope>
    <source>
        <strain>NCTC 10247</strain>
    </source>
</reference>